<dbReference type="EMBL" id="L25637">
    <property type="protein sequence ID" value="AAA20679.1"/>
    <property type="molecule type" value="Genomic_DNA"/>
</dbReference>
<dbReference type="PIR" id="I51436">
    <property type="entry name" value="I51436"/>
</dbReference>
<dbReference type="RefSeq" id="NP_001165629.1">
    <property type="nucleotide sequence ID" value="NM_001172158.1"/>
</dbReference>
<dbReference type="SMR" id="Q91765"/>
<dbReference type="ChEMBL" id="CHEMBL3350224"/>
<dbReference type="GeneID" id="100127318"/>
<dbReference type="KEGG" id="xla:100127318"/>
<dbReference type="AGR" id="Xenbase:XB-GENE-865381"/>
<dbReference type="CTD" id="100127318"/>
<dbReference type="Xenbase" id="XB-GENE-865381">
    <property type="gene designation" value="foxa2.L"/>
</dbReference>
<dbReference type="OrthoDB" id="5954824at2759"/>
<dbReference type="Proteomes" id="UP000186698">
    <property type="component" value="Chromosome 5L"/>
</dbReference>
<dbReference type="Bgee" id="100127318">
    <property type="expression patterns" value="Expressed in lung and 8 other cell types or tissues"/>
</dbReference>
<dbReference type="GO" id="GO:0005634">
    <property type="term" value="C:nucleus"/>
    <property type="evidence" value="ECO:0000250"/>
    <property type="project" value="UniProtKB"/>
</dbReference>
<dbReference type="GO" id="GO:0000981">
    <property type="term" value="F:DNA-binding transcription factor activity, RNA polymerase II-specific"/>
    <property type="evidence" value="ECO:0000318"/>
    <property type="project" value="GO_Central"/>
</dbReference>
<dbReference type="GO" id="GO:0019904">
    <property type="term" value="F:protein domain specific binding"/>
    <property type="evidence" value="ECO:0007669"/>
    <property type="project" value="InterPro"/>
</dbReference>
<dbReference type="GO" id="GO:0000978">
    <property type="term" value="F:RNA polymerase II cis-regulatory region sequence-specific DNA binding"/>
    <property type="evidence" value="ECO:0000318"/>
    <property type="project" value="GO_Central"/>
</dbReference>
<dbReference type="GO" id="GO:0043565">
    <property type="term" value="F:sequence-specific DNA binding"/>
    <property type="evidence" value="ECO:0000314"/>
    <property type="project" value="UniProtKB"/>
</dbReference>
<dbReference type="GO" id="GO:0009653">
    <property type="term" value="P:anatomical structure morphogenesis"/>
    <property type="evidence" value="ECO:0000318"/>
    <property type="project" value="GO_Central"/>
</dbReference>
<dbReference type="GO" id="GO:0030154">
    <property type="term" value="P:cell differentiation"/>
    <property type="evidence" value="ECO:0000318"/>
    <property type="project" value="GO_Central"/>
</dbReference>
<dbReference type="GO" id="GO:0001707">
    <property type="term" value="P:mesoderm formation"/>
    <property type="evidence" value="ECO:0000315"/>
    <property type="project" value="UniProtKB"/>
</dbReference>
<dbReference type="GO" id="GO:0045893">
    <property type="term" value="P:positive regulation of DNA-templated transcription"/>
    <property type="evidence" value="ECO:0000314"/>
    <property type="project" value="UniProtKB"/>
</dbReference>
<dbReference type="GO" id="GO:0006357">
    <property type="term" value="P:regulation of transcription by RNA polymerase II"/>
    <property type="evidence" value="ECO:0000318"/>
    <property type="project" value="GO_Central"/>
</dbReference>
<dbReference type="CDD" id="cd20039">
    <property type="entry name" value="FH_FOXA2"/>
    <property type="match status" value="1"/>
</dbReference>
<dbReference type="FunFam" id="1.10.10.10:FF:000042">
    <property type="entry name" value="hepatocyte nuclear factor 3-beta"/>
    <property type="match status" value="1"/>
</dbReference>
<dbReference type="Gene3D" id="1.10.10.10">
    <property type="entry name" value="Winged helix-like DNA-binding domain superfamily/Winged helix DNA-binding domain"/>
    <property type="match status" value="1"/>
</dbReference>
<dbReference type="InterPro" id="IPR013638">
    <property type="entry name" value="Fork-head_N"/>
</dbReference>
<dbReference type="InterPro" id="IPR001766">
    <property type="entry name" value="Fork_head_dom"/>
</dbReference>
<dbReference type="InterPro" id="IPR018533">
    <property type="entry name" value="Forkhead_box_C"/>
</dbReference>
<dbReference type="InterPro" id="IPR050211">
    <property type="entry name" value="FOX_domain-containing"/>
</dbReference>
<dbReference type="InterPro" id="IPR018122">
    <property type="entry name" value="TF_fork_head_CS_1"/>
</dbReference>
<dbReference type="InterPro" id="IPR030456">
    <property type="entry name" value="TF_fork_head_CS_2"/>
</dbReference>
<dbReference type="InterPro" id="IPR036388">
    <property type="entry name" value="WH-like_DNA-bd_sf"/>
</dbReference>
<dbReference type="InterPro" id="IPR036390">
    <property type="entry name" value="WH_DNA-bd_sf"/>
</dbReference>
<dbReference type="PANTHER" id="PTHR11829">
    <property type="entry name" value="FORKHEAD BOX PROTEIN"/>
    <property type="match status" value="1"/>
</dbReference>
<dbReference type="PANTHER" id="PTHR11829:SF167">
    <property type="entry name" value="HEPATOCYTE NUCLEAR FACTOR 3-BETA"/>
    <property type="match status" value="1"/>
</dbReference>
<dbReference type="Pfam" id="PF00250">
    <property type="entry name" value="Forkhead"/>
    <property type="match status" value="1"/>
</dbReference>
<dbReference type="Pfam" id="PF08430">
    <property type="entry name" value="Forkhead_N"/>
    <property type="match status" value="1"/>
</dbReference>
<dbReference type="Pfam" id="PF09354">
    <property type="entry name" value="HNF_C"/>
    <property type="match status" value="1"/>
</dbReference>
<dbReference type="PRINTS" id="PR00053">
    <property type="entry name" value="FORKHEAD"/>
</dbReference>
<dbReference type="SMART" id="SM00339">
    <property type="entry name" value="FH"/>
    <property type="match status" value="1"/>
</dbReference>
<dbReference type="SUPFAM" id="SSF46785">
    <property type="entry name" value="Winged helix' DNA-binding domain"/>
    <property type="match status" value="1"/>
</dbReference>
<dbReference type="PROSITE" id="PS00657">
    <property type="entry name" value="FORK_HEAD_1"/>
    <property type="match status" value="1"/>
</dbReference>
<dbReference type="PROSITE" id="PS00658">
    <property type="entry name" value="FORK_HEAD_2"/>
    <property type="match status" value="1"/>
</dbReference>
<dbReference type="PROSITE" id="PS50039">
    <property type="entry name" value="FORK_HEAD_3"/>
    <property type="match status" value="1"/>
</dbReference>
<sequence>MLGAVKMEGHEATDWSSYYGEAEAYSSVGNMNAGLSMNPMNTYMSMSAMRTSANMTASSMNMSYVNTGMSPSLTGMSPGTGAMTGMGTGVPSMASHLSPSMIPMSAQTTAMNALAPYTNINSMSPIYGQSNINRSRDPKTYRRSYTHAKPPYSYISLITMAIQQSPNKMLTLSEIYQWIMDLFPFYRQNQQRWQNSIRHSLSFNDCFLKVPRSPDKPGKGSFWTLHPDSGNMFENGCYLRRQKRFKCEKKPSLREGGGKKLSEGASSVGSAANSSSESSVGNESPHSSSSPCQEQKRSLVDMKSSQGLSPKHATSPASQAQHLLSQHHSVLSHEAQSHLKPEHHYSFNHPFSINNLMSSEQQHHHHHHHNHHHHHKMDLKAYEQVMHYSSYGSPMAGSLAMSTVTNKSGLESSPITSDTSYYQGGYSRPIMNSS</sequence>
<name>FXA2A_XENLA</name>
<protein>
    <recommendedName>
        <fullName>Forkhead box protein A2-A</fullName>
        <shortName>FoxA2-A</shortName>
        <shortName>FoxA2a</shortName>
    </recommendedName>
    <alternativeName>
        <fullName>Fork head domain-related protein 3</fullName>
        <shortName>xFD-3</shortName>
    </alternativeName>
    <alternativeName>
        <fullName>Hepatocyte nuclear factor 3-beta homolog A</fullName>
        <shortName>HNF-3-beta-A</shortName>
        <shortName>HNF3-beta homolog A</shortName>
        <shortName>HNF3-beta-A</shortName>
        <shortName>xHNF3-beta-A</shortName>
        <shortName>xbeta-1</shortName>
    </alternativeName>
</protein>
<accession>Q91765</accession>
<keyword id="KW-0010">Activator</keyword>
<keyword id="KW-0217">Developmental protein</keyword>
<keyword id="KW-0238">DNA-binding</keyword>
<keyword id="KW-0539">Nucleus</keyword>
<keyword id="KW-1185">Reference proteome</keyword>
<keyword id="KW-0804">Transcription</keyword>
<keyword id="KW-0805">Transcription regulation</keyword>
<evidence type="ECO:0000255" key="1"/>
<evidence type="ECO:0000255" key="2">
    <source>
        <dbReference type="PROSITE-ProRule" id="PRU00089"/>
    </source>
</evidence>
<evidence type="ECO:0000256" key="3">
    <source>
        <dbReference type="SAM" id="MobiDB-lite"/>
    </source>
</evidence>
<evidence type="ECO:0000269" key="4">
    <source>
    </source>
</evidence>
<evidence type="ECO:0000269" key="5">
    <source>
    </source>
</evidence>
<evidence type="ECO:0000269" key="6">
    <source>
    </source>
</evidence>
<evidence type="ECO:0000269" key="7">
    <source>
    </source>
</evidence>
<evidence type="ECO:0000305" key="8"/>
<evidence type="ECO:0000312" key="9">
    <source>
        <dbReference type="EMBL" id="AAA20679.1"/>
    </source>
</evidence>
<reference evidence="8 9" key="1">
    <citation type="journal article" date="1993" name="Mech. Dev.">
        <title>Sequential expression of HNF-3beta and HNF-3alpha by embryonic organizing centers: the dorsal lip/node, notochord and floor plate.</title>
        <authorList>
            <person name="Ruiz i Altaba A."/>
            <person name="Prezioso V.R."/>
            <person name="Darnell J.E."/>
            <person name="Jessell T.M."/>
        </authorList>
    </citation>
    <scope>NUCLEOTIDE SEQUENCE [GENOMIC DNA]</scope>
    <scope>TISSUE SPECIFICITY</scope>
    <scope>DEVELOPMENTAL STAGE</scope>
    <source>
        <tissue evidence="6">Gastrula</tissue>
    </source>
</reference>
<reference evidence="8" key="2">
    <citation type="journal article" date="1996" name="Int. J. Dev. Biol.">
        <title>A fork head related multigene family is transcribed in Xenopus laevis embryos.</title>
        <authorList>
            <person name="Lef J."/>
            <person name="Dege P."/>
            <person name="Scheucher M."/>
            <person name="Forsbach-Birk V."/>
            <person name="Clement J.H."/>
            <person name="Knoechel W."/>
        </authorList>
    </citation>
    <scope>NUCLEOTIDE SEQUENCE [MRNA]</scope>
    <scope>TISSUE SPECIFICITY</scope>
    <scope>DEVELOPMENTAL STAGE</scope>
    <source>
        <tissue evidence="7">Gastrula</tissue>
    </source>
</reference>
<reference evidence="8" key="3">
    <citation type="journal article" date="1992" name="Mech. Dev.">
        <title>Activin A induced expression of a fork head related gene in posterior chordamesoderm (notochord) of Xenopus laevis embryos.</title>
        <authorList>
            <person name="Knoechel S."/>
            <person name="Lef J."/>
            <person name="Clement J.H."/>
            <person name="Klocke B."/>
            <person name="Hille S."/>
            <person name="Koester M."/>
            <person name="Knoechel W."/>
        </authorList>
    </citation>
    <scope>NUCLEOTIDE SEQUENCE [MRNA] OF 140-250</scope>
    <source>
        <tissue evidence="4">Gastrula</tissue>
    </source>
</reference>
<reference evidence="8" key="4">
    <citation type="journal article" date="1995" name="J. Mol. Biol.">
        <title>DNA recognition site analysis of Xenopus winged helix proteins.</title>
        <authorList>
            <person name="Kaufmann E."/>
            <person name="Mueller D."/>
            <person name="Knoechel W."/>
        </authorList>
    </citation>
    <scope>DNA-BINDING</scope>
</reference>
<reference evidence="8" key="5">
    <citation type="journal article" date="2004" name="Dev. Biol.">
        <title>Inhibition of mesodermal fate by Xenopus HNF3beta/FoxA2.</title>
        <authorList>
            <person name="Suri C."/>
            <person name="Haremaki T."/>
            <person name="Weinstein D.C."/>
        </authorList>
    </citation>
    <scope>FUNCTION</scope>
    <scope>TISSUE SPECIFICITY</scope>
    <scope>DEVELOPMENTAL STAGE</scope>
    <scope>MUTAGENESIS OF ASN-195; HIS-199 AND ARG-241</scope>
</reference>
<reference evidence="8" key="6">
    <citation type="journal article" date="2005" name="Gene">
        <title>Of fox and frogs: fox (fork head/winged helix) transcription factors in Xenopus development.</title>
        <authorList>
            <person name="Pohl B.S."/>
            <person name="Knoechel W."/>
        </authorList>
    </citation>
    <scope>REVIEW</scope>
</reference>
<gene>
    <name type="primary">foxa2-a</name>
</gene>
<comment type="function">
    <text evidence="5">Acts as a transcriptional activator during early development, limiting the extent of mesoderm formation in the gastrula. Binds to DNA via the target sequence 5'-GT[AC]AACA-3', with 5'-GTAAACA-3' being the preferred binding site.</text>
</comment>
<comment type="subcellular location">
    <subcellularLocation>
        <location evidence="1 8">Nucleus</location>
    </subcellularLocation>
</comment>
<comment type="tissue specificity">
    <text evidence="5 6 7">At gastrula stage, expressed in both the anterior and posterior endoderm, with endodermal expression persisting into early tailbud stages. Expression is absent in gastrula stage ectoderm. During tailbud stages, expressed in the pharyngeal region, the neural floor plate, the midbrain, hindbrain and in cranial neural crest cells. Expressed in the foregut of hatching larvae. In tadpoles, expressed in the pharyngeal pouches and in other anterior endodermal regions. Within the tadpole nervous system, expressed in the neural floor plate, at high levels in the ventral midbrain and hindbrain, and at lower levels in the spinal cord. Expressed in the adult lung and brain.</text>
</comment>
<comment type="developmental stage">
    <text evidence="5 6 7">First detected in early gastrula stage embryos. Abundant at the neurula stage, becoming less abundant at later stages.</text>
</comment>
<feature type="chain" id="PRO_0000248856" description="Forkhead box protein A2-A">
    <location>
        <begin position="1"/>
        <end position="434"/>
    </location>
</feature>
<feature type="DNA-binding region" description="Fork-head" evidence="2">
    <location>
        <begin position="149"/>
        <end position="243"/>
    </location>
</feature>
<feature type="region of interest" description="Disordered" evidence="3">
    <location>
        <begin position="249"/>
        <end position="339"/>
    </location>
</feature>
<feature type="region of interest" description="Disordered" evidence="3">
    <location>
        <begin position="408"/>
        <end position="434"/>
    </location>
</feature>
<feature type="compositionally biased region" description="Basic and acidic residues" evidence="3">
    <location>
        <begin position="249"/>
        <end position="262"/>
    </location>
</feature>
<feature type="compositionally biased region" description="Low complexity" evidence="3">
    <location>
        <begin position="263"/>
        <end position="291"/>
    </location>
</feature>
<feature type="compositionally biased region" description="Low complexity" evidence="3">
    <location>
        <begin position="317"/>
        <end position="333"/>
    </location>
</feature>
<feature type="compositionally biased region" description="Polar residues" evidence="3">
    <location>
        <begin position="408"/>
        <end position="422"/>
    </location>
</feature>
<feature type="mutagenesis site" description="Abolishes DNA-binding activity and reduces ability to inhibit mesoderm formation; when associated with C-199 and E-241." evidence="5">
    <original>N</original>
    <variation>D</variation>
    <location>
        <position position="195"/>
    </location>
</feature>
<feature type="mutagenesis site" description="Abolishes DNA-binding activity and reduces ability to inhibit mesoderm formation; when associated with D-195 and E-241." evidence="5">
    <original>H</original>
    <variation>C</variation>
    <location>
        <position position="199"/>
    </location>
</feature>
<feature type="mutagenesis site" description="Abolishes DNA-binding activity and reduces ability to inhibit mesoderm formation; when associated with D-195 and C-199." evidence="5">
    <original>R</original>
    <variation>E</variation>
    <location>
        <position position="241"/>
    </location>
</feature>
<feature type="sequence conflict" description="In Ref. 2; no nucleotide entry." evidence="8" ref="2">
    <original>R</original>
    <variation>S</variation>
    <location>
        <position position="50"/>
    </location>
</feature>
<feature type="sequence conflict" description="In Ref. 2; no nucleotide entry." evidence="8" ref="2">
    <original>I</original>
    <variation>S</variation>
    <location>
        <position position="102"/>
    </location>
</feature>
<feature type="sequence conflict" description="In Ref. 2; no nucleotide entry." evidence="8" ref="2">
    <original>K</original>
    <variation>E</variation>
    <location>
        <position position="311"/>
    </location>
</feature>
<organism>
    <name type="scientific">Xenopus laevis</name>
    <name type="common">African clawed frog</name>
    <dbReference type="NCBI Taxonomy" id="8355"/>
    <lineage>
        <taxon>Eukaryota</taxon>
        <taxon>Metazoa</taxon>
        <taxon>Chordata</taxon>
        <taxon>Craniata</taxon>
        <taxon>Vertebrata</taxon>
        <taxon>Euteleostomi</taxon>
        <taxon>Amphibia</taxon>
        <taxon>Batrachia</taxon>
        <taxon>Anura</taxon>
        <taxon>Pipoidea</taxon>
        <taxon>Pipidae</taxon>
        <taxon>Xenopodinae</taxon>
        <taxon>Xenopus</taxon>
        <taxon>Xenopus</taxon>
    </lineage>
</organism>
<proteinExistence type="evidence at protein level"/>